<protein>
    <recommendedName>
        <fullName evidence="1">Large ribosomal subunit protein uL18</fullName>
    </recommendedName>
    <alternativeName>
        <fullName evidence="3">50S ribosomal protein L18</fullName>
    </alternativeName>
</protein>
<keyword id="KW-0687">Ribonucleoprotein</keyword>
<keyword id="KW-0689">Ribosomal protein</keyword>
<keyword id="KW-0694">RNA-binding</keyword>
<keyword id="KW-0699">rRNA-binding</keyword>
<proteinExistence type="inferred from homology"/>
<gene>
    <name evidence="1" type="primary">rplR</name>
    <name evidence="1" type="synonym">rpl18</name>
    <name type="ordered locus">P9303_23181</name>
</gene>
<organism>
    <name type="scientific">Prochlorococcus marinus (strain MIT 9303)</name>
    <dbReference type="NCBI Taxonomy" id="59922"/>
    <lineage>
        <taxon>Bacteria</taxon>
        <taxon>Bacillati</taxon>
        <taxon>Cyanobacteriota</taxon>
        <taxon>Cyanophyceae</taxon>
        <taxon>Synechococcales</taxon>
        <taxon>Prochlorococcaceae</taxon>
        <taxon>Prochlorococcus</taxon>
    </lineage>
</organism>
<feature type="chain" id="PRO_1000053081" description="Large ribosomal subunit protein uL18">
    <location>
        <begin position="1"/>
        <end position="122"/>
    </location>
</feature>
<feature type="region of interest" description="Disordered" evidence="2">
    <location>
        <begin position="1"/>
        <end position="27"/>
    </location>
</feature>
<feature type="compositionally biased region" description="Basic residues" evidence="2">
    <location>
        <begin position="9"/>
        <end position="21"/>
    </location>
</feature>
<accession>A2CC43</accession>
<dbReference type="EMBL" id="CP000554">
    <property type="protein sequence ID" value="ABM79053.1"/>
    <property type="molecule type" value="Genomic_DNA"/>
</dbReference>
<dbReference type="RefSeq" id="WP_011826919.1">
    <property type="nucleotide sequence ID" value="NC_008820.1"/>
</dbReference>
<dbReference type="SMR" id="A2CC43"/>
<dbReference type="STRING" id="59922.P9303_23181"/>
<dbReference type="KEGG" id="pmf:P9303_23181"/>
<dbReference type="HOGENOM" id="CLU_098841_0_1_3"/>
<dbReference type="BioCyc" id="PMAR59922:G1G80-2034-MONOMER"/>
<dbReference type="Proteomes" id="UP000002274">
    <property type="component" value="Chromosome"/>
</dbReference>
<dbReference type="GO" id="GO:0022625">
    <property type="term" value="C:cytosolic large ribosomal subunit"/>
    <property type="evidence" value="ECO:0007669"/>
    <property type="project" value="TreeGrafter"/>
</dbReference>
<dbReference type="GO" id="GO:0008097">
    <property type="term" value="F:5S rRNA binding"/>
    <property type="evidence" value="ECO:0007669"/>
    <property type="project" value="TreeGrafter"/>
</dbReference>
<dbReference type="GO" id="GO:0003735">
    <property type="term" value="F:structural constituent of ribosome"/>
    <property type="evidence" value="ECO:0007669"/>
    <property type="project" value="InterPro"/>
</dbReference>
<dbReference type="GO" id="GO:0006412">
    <property type="term" value="P:translation"/>
    <property type="evidence" value="ECO:0007669"/>
    <property type="project" value="UniProtKB-UniRule"/>
</dbReference>
<dbReference type="CDD" id="cd00432">
    <property type="entry name" value="Ribosomal_L18_L5e"/>
    <property type="match status" value="1"/>
</dbReference>
<dbReference type="FunFam" id="3.30.420.100:FF:000001">
    <property type="entry name" value="50S ribosomal protein L18"/>
    <property type="match status" value="1"/>
</dbReference>
<dbReference type="Gene3D" id="3.30.420.100">
    <property type="match status" value="1"/>
</dbReference>
<dbReference type="HAMAP" id="MF_01337_B">
    <property type="entry name" value="Ribosomal_uL18_B"/>
    <property type="match status" value="1"/>
</dbReference>
<dbReference type="InterPro" id="IPR004389">
    <property type="entry name" value="Ribosomal_uL18_bac-type"/>
</dbReference>
<dbReference type="InterPro" id="IPR005484">
    <property type="entry name" value="Ribosomal_uL18_bac/euk"/>
</dbReference>
<dbReference type="NCBIfam" id="TIGR00060">
    <property type="entry name" value="L18_bact"/>
    <property type="match status" value="1"/>
</dbReference>
<dbReference type="PANTHER" id="PTHR12899">
    <property type="entry name" value="39S RIBOSOMAL PROTEIN L18, MITOCHONDRIAL"/>
    <property type="match status" value="1"/>
</dbReference>
<dbReference type="PANTHER" id="PTHR12899:SF3">
    <property type="entry name" value="LARGE RIBOSOMAL SUBUNIT PROTEIN UL18M"/>
    <property type="match status" value="1"/>
</dbReference>
<dbReference type="Pfam" id="PF00861">
    <property type="entry name" value="Ribosomal_L18p"/>
    <property type="match status" value="1"/>
</dbReference>
<dbReference type="SUPFAM" id="SSF53137">
    <property type="entry name" value="Translational machinery components"/>
    <property type="match status" value="1"/>
</dbReference>
<comment type="function">
    <text evidence="1">This is one of the proteins that bind and probably mediate the attachment of the 5S RNA into the large ribosomal subunit, where it forms part of the central protuberance.</text>
</comment>
<comment type="subunit">
    <text evidence="1">Part of the 50S ribosomal subunit; part of the 5S rRNA/L5/L18/L25 subcomplex. Contacts the 5S and 23S rRNAs.</text>
</comment>
<comment type="similarity">
    <text evidence="1">Belongs to the universal ribosomal protein uL18 family.</text>
</comment>
<evidence type="ECO:0000255" key="1">
    <source>
        <dbReference type="HAMAP-Rule" id="MF_01337"/>
    </source>
</evidence>
<evidence type="ECO:0000256" key="2">
    <source>
        <dbReference type="SAM" id="MobiDB-lite"/>
    </source>
</evidence>
<evidence type="ECO:0000305" key="3"/>
<name>RL18_PROM3</name>
<sequence>MSNLSRKQQTQKRHRRLRRHLNGTAQRPRLAVFRSNNHIYAQVIDDEAQNTLCAASTLDKDLRTSLKADGSSCDASNAVGDLVAKRALAKGIQQVVFDRGGNLYHGRVKSLADAAREAGLQF</sequence>
<reference key="1">
    <citation type="journal article" date="2007" name="PLoS Genet.">
        <title>Patterns and implications of gene gain and loss in the evolution of Prochlorococcus.</title>
        <authorList>
            <person name="Kettler G.C."/>
            <person name="Martiny A.C."/>
            <person name="Huang K."/>
            <person name="Zucker J."/>
            <person name="Coleman M.L."/>
            <person name="Rodrigue S."/>
            <person name="Chen F."/>
            <person name="Lapidus A."/>
            <person name="Ferriera S."/>
            <person name="Johnson J."/>
            <person name="Steglich C."/>
            <person name="Church G.M."/>
            <person name="Richardson P."/>
            <person name="Chisholm S.W."/>
        </authorList>
    </citation>
    <scope>NUCLEOTIDE SEQUENCE [LARGE SCALE GENOMIC DNA]</scope>
    <source>
        <strain>MIT 9303</strain>
    </source>
</reference>